<organism>
    <name type="scientific">Dictyostelium discoideum</name>
    <name type="common">Social amoeba</name>
    <dbReference type="NCBI Taxonomy" id="44689"/>
    <lineage>
        <taxon>Eukaryota</taxon>
        <taxon>Amoebozoa</taxon>
        <taxon>Evosea</taxon>
        <taxon>Eumycetozoa</taxon>
        <taxon>Dictyostelia</taxon>
        <taxon>Dictyosteliales</taxon>
        <taxon>Dictyosteliaceae</taxon>
        <taxon>Dictyostelium</taxon>
    </lineage>
</organism>
<name>Y5766_DICDI</name>
<reference key="1">
    <citation type="journal article" date="2005" name="Nature">
        <title>The genome of the social amoeba Dictyostelium discoideum.</title>
        <authorList>
            <person name="Eichinger L."/>
            <person name="Pachebat J.A."/>
            <person name="Gloeckner G."/>
            <person name="Rajandream M.A."/>
            <person name="Sucgang R."/>
            <person name="Berriman M."/>
            <person name="Song J."/>
            <person name="Olsen R."/>
            <person name="Szafranski K."/>
            <person name="Xu Q."/>
            <person name="Tunggal B."/>
            <person name="Kummerfeld S."/>
            <person name="Madera M."/>
            <person name="Konfortov B.A."/>
            <person name="Rivero F."/>
            <person name="Bankier A.T."/>
            <person name="Lehmann R."/>
            <person name="Hamlin N."/>
            <person name="Davies R."/>
            <person name="Gaudet P."/>
            <person name="Fey P."/>
            <person name="Pilcher K."/>
            <person name="Chen G."/>
            <person name="Saunders D."/>
            <person name="Sodergren E.J."/>
            <person name="Davis P."/>
            <person name="Kerhornou A."/>
            <person name="Nie X."/>
            <person name="Hall N."/>
            <person name="Anjard C."/>
            <person name="Hemphill L."/>
            <person name="Bason N."/>
            <person name="Farbrother P."/>
            <person name="Desany B."/>
            <person name="Just E."/>
            <person name="Morio T."/>
            <person name="Rost R."/>
            <person name="Churcher C.M."/>
            <person name="Cooper J."/>
            <person name="Haydock S."/>
            <person name="van Driessche N."/>
            <person name="Cronin A."/>
            <person name="Goodhead I."/>
            <person name="Muzny D.M."/>
            <person name="Mourier T."/>
            <person name="Pain A."/>
            <person name="Lu M."/>
            <person name="Harper D."/>
            <person name="Lindsay R."/>
            <person name="Hauser H."/>
            <person name="James K.D."/>
            <person name="Quiles M."/>
            <person name="Madan Babu M."/>
            <person name="Saito T."/>
            <person name="Buchrieser C."/>
            <person name="Wardroper A."/>
            <person name="Felder M."/>
            <person name="Thangavelu M."/>
            <person name="Johnson D."/>
            <person name="Knights A."/>
            <person name="Loulseged H."/>
            <person name="Mungall K.L."/>
            <person name="Oliver K."/>
            <person name="Price C."/>
            <person name="Quail M.A."/>
            <person name="Urushihara H."/>
            <person name="Hernandez J."/>
            <person name="Rabbinowitsch E."/>
            <person name="Steffen D."/>
            <person name="Sanders M."/>
            <person name="Ma J."/>
            <person name="Kohara Y."/>
            <person name="Sharp S."/>
            <person name="Simmonds M.N."/>
            <person name="Spiegler S."/>
            <person name="Tivey A."/>
            <person name="Sugano S."/>
            <person name="White B."/>
            <person name="Walker D."/>
            <person name="Woodward J.R."/>
            <person name="Winckler T."/>
            <person name="Tanaka Y."/>
            <person name="Shaulsky G."/>
            <person name="Schleicher M."/>
            <person name="Weinstock G.M."/>
            <person name="Rosenthal A."/>
            <person name="Cox E.C."/>
            <person name="Chisholm R.L."/>
            <person name="Gibbs R.A."/>
            <person name="Loomis W.F."/>
            <person name="Platzer M."/>
            <person name="Kay R.R."/>
            <person name="Williams J.G."/>
            <person name="Dear P.H."/>
            <person name="Noegel A.A."/>
            <person name="Barrell B.G."/>
            <person name="Kuspa A."/>
        </authorList>
    </citation>
    <scope>NUCLEOTIDE SEQUENCE [LARGE SCALE GENOMIC DNA]</scope>
    <source>
        <strain>AX4</strain>
    </source>
</reference>
<protein>
    <recommendedName>
        <fullName>Putative uncharacterized protein DDB_G0287177</fullName>
    </recommendedName>
</protein>
<dbReference type="EMBL" id="AAFI02000098">
    <property type="protein sequence ID" value="EAL63863.1"/>
    <property type="molecule type" value="Genomic_DNA"/>
</dbReference>
<dbReference type="RefSeq" id="XP_637379.1">
    <property type="nucleotide sequence ID" value="XM_632287.1"/>
</dbReference>
<dbReference type="PaxDb" id="44689-DDB0215766"/>
<dbReference type="EnsemblProtists" id="EAL63863">
    <property type="protein sequence ID" value="EAL63863"/>
    <property type="gene ID" value="DDB_G0287177"/>
</dbReference>
<dbReference type="GeneID" id="8626003"/>
<dbReference type="KEGG" id="ddi:DDB_G0287177"/>
<dbReference type="dictyBase" id="DDB_G0287177"/>
<dbReference type="VEuPathDB" id="AmoebaDB:DDB_G0287177"/>
<dbReference type="HOGENOM" id="CLU_2150615_0_0_1"/>
<dbReference type="InParanoid" id="Q54KQ1"/>
<dbReference type="PRO" id="PR:Q54KQ1"/>
<dbReference type="Proteomes" id="UP000002195">
    <property type="component" value="Chromosome 4"/>
</dbReference>
<accession>Q54KQ1</accession>
<sequence length="112" mass="12932">MNEAGLIVDSFNIEDWNLGDYTQEDDHINKFCEKIGKNEYDLERDFQEDLNELSINSNRLELYDSSKKNVLGTSSDWVVKTKSCPLDPHHIHIVGDTKIIRTKQYTLDGSII</sequence>
<proteinExistence type="predicted"/>
<gene>
    <name type="ORF">DDB_G0287177</name>
</gene>
<feature type="chain" id="PRO_0000347038" description="Putative uncharacterized protein DDB_G0287177">
    <location>
        <begin position="1"/>
        <end position="112"/>
    </location>
</feature>
<keyword id="KW-1185">Reference proteome</keyword>